<dbReference type="EC" id="6.3.4.4" evidence="1"/>
<dbReference type="EMBL" id="CP001052">
    <property type="protein sequence ID" value="ACD16925.1"/>
    <property type="molecule type" value="Genomic_DNA"/>
</dbReference>
<dbReference type="RefSeq" id="WP_012433520.1">
    <property type="nucleotide sequence ID" value="NC_010681.1"/>
</dbReference>
<dbReference type="SMR" id="B2SXR9"/>
<dbReference type="STRING" id="398527.Bphyt_2530"/>
<dbReference type="KEGG" id="bpy:Bphyt_2530"/>
<dbReference type="eggNOG" id="COG0104">
    <property type="taxonomic scope" value="Bacteria"/>
</dbReference>
<dbReference type="HOGENOM" id="CLU_029848_0_0_4"/>
<dbReference type="OrthoDB" id="9807553at2"/>
<dbReference type="UniPathway" id="UPA00075">
    <property type="reaction ID" value="UER00335"/>
</dbReference>
<dbReference type="Proteomes" id="UP000001739">
    <property type="component" value="Chromosome 1"/>
</dbReference>
<dbReference type="GO" id="GO:0005737">
    <property type="term" value="C:cytoplasm"/>
    <property type="evidence" value="ECO:0007669"/>
    <property type="project" value="UniProtKB-SubCell"/>
</dbReference>
<dbReference type="GO" id="GO:0004019">
    <property type="term" value="F:adenylosuccinate synthase activity"/>
    <property type="evidence" value="ECO:0007669"/>
    <property type="project" value="UniProtKB-UniRule"/>
</dbReference>
<dbReference type="GO" id="GO:0005525">
    <property type="term" value="F:GTP binding"/>
    <property type="evidence" value="ECO:0007669"/>
    <property type="project" value="UniProtKB-UniRule"/>
</dbReference>
<dbReference type="GO" id="GO:0000287">
    <property type="term" value="F:magnesium ion binding"/>
    <property type="evidence" value="ECO:0007669"/>
    <property type="project" value="UniProtKB-UniRule"/>
</dbReference>
<dbReference type="GO" id="GO:0044208">
    <property type="term" value="P:'de novo' AMP biosynthetic process"/>
    <property type="evidence" value="ECO:0007669"/>
    <property type="project" value="UniProtKB-UniRule"/>
</dbReference>
<dbReference type="GO" id="GO:0046040">
    <property type="term" value="P:IMP metabolic process"/>
    <property type="evidence" value="ECO:0007669"/>
    <property type="project" value="TreeGrafter"/>
</dbReference>
<dbReference type="CDD" id="cd03108">
    <property type="entry name" value="AdSS"/>
    <property type="match status" value="1"/>
</dbReference>
<dbReference type="FunFam" id="1.10.300.10:FF:000001">
    <property type="entry name" value="Adenylosuccinate synthetase"/>
    <property type="match status" value="1"/>
</dbReference>
<dbReference type="FunFam" id="3.90.170.10:FF:000001">
    <property type="entry name" value="Adenylosuccinate synthetase"/>
    <property type="match status" value="1"/>
</dbReference>
<dbReference type="Gene3D" id="3.40.440.10">
    <property type="entry name" value="Adenylosuccinate Synthetase, subunit A, domain 1"/>
    <property type="match status" value="1"/>
</dbReference>
<dbReference type="Gene3D" id="1.10.300.10">
    <property type="entry name" value="Adenylosuccinate Synthetase, subunit A, domain 2"/>
    <property type="match status" value="1"/>
</dbReference>
<dbReference type="Gene3D" id="3.90.170.10">
    <property type="entry name" value="Adenylosuccinate Synthetase, subunit A, domain 3"/>
    <property type="match status" value="1"/>
</dbReference>
<dbReference type="HAMAP" id="MF_00011">
    <property type="entry name" value="Adenylosucc_synth"/>
    <property type="match status" value="1"/>
</dbReference>
<dbReference type="InterPro" id="IPR018220">
    <property type="entry name" value="Adenylosuccin_syn_GTP-bd"/>
</dbReference>
<dbReference type="InterPro" id="IPR033128">
    <property type="entry name" value="Adenylosuccin_syn_Lys_AS"/>
</dbReference>
<dbReference type="InterPro" id="IPR042109">
    <property type="entry name" value="Adenylosuccinate_synth_dom1"/>
</dbReference>
<dbReference type="InterPro" id="IPR042110">
    <property type="entry name" value="Adenylosuccinate_synth_dom2"/>
</dbReference>
<dbReference type="InterPro" id="IPR042111">
    <property type="entry name" value="Adenylosuccinate_synth_dom3"/>
</dbReference>
<dbReference type="InterPro" id="IPR001114">
    <property type="entry name" value="Adenylosuccinate_synthetase"/>
</dbReference>
<dbReference type="InterPro" id="IPR027417">
    <property type="entry name" value="P-loop_NTPase"/>
</dbReference>
<dbReference type="NCBIfam" id="NF002223">
    <property type="entry name" value="PRK01117.1"/>
    <property type="match status" value="1"/>
</dbReference>
<dbReference type="NCBIfam" id="TIGR00184">
    <property type="entry name" value="purA"/>
    <property type="match status" value="1"/>
</dbReference>
<dbReference type="PANTHER" id="PTHR11846">
    <property type="entry name" value="ADENYLOSUCCINATE SYNTHETASE"/>
    <property type="match status" value="1"/>
</dbReference>
<dbReference type="PANTHER" id="PTHR11846:SF0">
    <property type="entry name" value="ADENYLOSUCCINATE SYNTHETASE"/>
    <property type="match status" value="1"/>
</dbReference>
<dbReference type="Pfam" id="PF00709">
    <property type="entry name" value="Adenylsucc_synt"/>
    <property type="match status" value="1"/>
</dbReference>
<dbReference type="SMART" id="SM00788">
    <property type="entry name" value="Adenylsucc_synt"/>
    <property type="match status" value="1"/>
</dbReference>
<dbReference type="SUPFAM" id="SSF52540">
    <property type="entry name" value="P-loop containing nucleoside triphosphate hydrolases"/>
    <property type="match status" value="1"/>
</dbReference>
<dbReference type="PROSITE" id="PS01266">
    <property type="entry name" value="ADENYLOSUCCIN_SYN_1"/>
    <property type="match status" value="1"/>
</dbReference>
<dbReference type="PROSITE" id="PS00513">
    <property type="entry name" value="ADENYLOSUCCIN_SYN_2"/>
    <property type="match status" value="1"/>
</dbReference>
<accession>B2SXR9</accession>
<proteinExistence type="inferred from homology"/>
<sequence>MSASAVNVNPGRNVVVVGTQWGDEGKGKIVDWLTDHAQGVVRFQGGHNAGHTLIIGGKKTILRLIPSGIMHPGVACYIGNGVVLSPEALFKEIGELEAAGVDVQNRLFISEATTLILPYHIAIDQGREARRGAGKIGTTGRGIGPAYEDKVARRGLRVQDLFEPETFAERLRENLDYHNFVLTQYLGVAAVDFQQTLDTMLSYADRLKPMVTDVSRRLYDANAAGSNLLFEGAQGTLLDIDHGTYPYVTSSNCVAGAATAGAGVGPQKLNYILGITKAYCTRVGSGPFPSELYDADNAARQEAIGLELATVGKEFGSVTGRPRRTGWLDVAALRRSIQINGVSGLCMTKLDVLDGLDEVKLCVGYTVDGNHVDLLPRGSSEVARCEPVYETFAGWKESTVGIKEWDKLPANARAYLSRVQEVAGIPIDMVSTGPDRDETILLRHPFKV</sequence>
<comment type="function">
    <text evidence="1">Plays an important role in the de novo pathway of purine nucleotide biosynthesis. Catalyzes the first committed step in the biosynthesis of AMP from IMP.</text>
</comment>
<comment type="catalytic activity">
    <reaction evidence="1">
        <text>IMP + L-aspartate + GTP = N(6)-(1,2-dicarboxyethyl)-AMP + GDP + phosphate + 2 H(+)</text>
        <dbReference type="Rhea" id="RHEA:15753"/>
        <dbReference type="ChEBI" id="CHEBI:15378"/>
        <dbReference type="ChEBI" id="CHEBI:29991"/>
        <dbReference type="ChEBI" id="CHEBI:37565"/>
        <dbReference type="ChEBI" id="CHEBI:43474"/>
        <dbReference type="ChEBI" id="CHEBI:57567"/>
        <dbReference type="ChEBI" id="CHEBI:58053"/>
        <dbReference type="ChEBI" id="CHEBI:58189"/>
        <dbReference type="EC" id="6.3.4.4"/>
    </reaction>
</comment>
<comment type="cofactor">
    <cofactor evidence="1">
        <name>Mg(2+)</name>
        <dbReference type="ChEBI" id="CHEBI:18420"/>
    </cofactor>
    <text evidence="1">Binds 1 Mg(2+) ion per subunit.</text>
</comment>
<comment type="pathway">
    <text evidence="1">Purine metabolism; AMP biosynthesis via de novo pathway; AMP from IMP: step 1/2.</text>
</comment>
<comment type="subunit">
    <text evidence="1">Homodimer.</text>
</comment>
<comment type="subcellular location">
    <subcellularLocation>
        <location evidence="1">Cytoplasm</location>
    </subcellularLocation>
</comment>
<comment type="similarity">
    <text evidence="1">Belongs to the adenylosuccinate synthetase family.</text>
</comment>
<organism>
    <name type="scientific">Paraburkholderia phytofirmans (strain DSM 17436 / LMG 22146 / PsJN)</name>
    <name type="common">Burkholderia phytofirmans</name>
    <dbReference type="NCBI Taxonomy" id="398527"/>
    <lineage>
        <taxon>Bacteria</taxon>
        <taxon>Pseudomonadati</taxon>
        <taxon>Pseudomonadota</taxon>
        <taxon>Betaproteobacteria</taxon>
        <taxon>Burkholderiales</taxon>
        <taxon>Burkholderiaceae</taxon>
        <taxon>Paraburkholderia</taxon>
    </lineage>
</organism>
<evidence type="ECO:0000255" key="1">
    <source>
        <dbReference type="HAMAP-Rule" id="MF_00011"/>
    </source>
</evidence>
<gene>
    <name evidence="1" type="primary">purA</name>
    <name type="ordered locus">Bphyt_2530</name>
</gene>
<keyword id="KW-0963">Cytoplasm</keyword>
<keyword id="KW-0342">GTP-binding</keyword>
<keyword id="KW-0436">Ligase</keyword>
<keyword id="KW-0460">Magnesium</keyword>
<keyword id="KW-0479">Metal-binding</keyword>
<keyword id="KW-0547">Nucleotide-binding</keyword>
<keyword id="KW-0658">Purine biosynthesis</keyword>
<reference key="1">
    <citation type="journal article" date="2011" name="J. Bacteriol.">
        <title>Complete genome sequence of the plant growth-promoting endophyte Burkholderia phytofirmans strain PsJN.</title>
        <authorList>
            <person name="Weilharter A."/>
            <person name="Mitter B."/>
            <person name="Shin M.V."/>
            <person name="Chain P.S."/>
            <person name="Nowak J."/>
            <person name="Sessitsch A."/>
        </authorList>
    </citation>
    <scope>NUCLEOTIDE SEQUENCE [LARGE SCALE GENOMIC DNA]</scope>
    <source>
        <strain>DSM 17436 / LMG 22146 / PsJN</strain>
    </source>
</reference>
<protein>
    <recommendedName>
        <fullName evidence="1">Adenylosuccinate synthetase</fullName>
        <shortName evidence="1">AMPSase</shortName>
        <shortName evidence="1">AdSS</shortName>
        <ecNumber evidence="1">6.3.4.4</ecNumber>
    </recommendedName>
    <alternativeName>
        <fullName evidence="1">IMP--aspartate ligase</fullName>
    </alternativeName>
</protein>
<name>PURA_PARPJ</name>
<feature type="chain" id="PRO_1000089275" description="Adenylosuccinate synthetase">
    <location>
        <begin position="1"/>
        <end position="448"/>
    </location>
</feature>
<feature type="active site" description="Proton acceptor" evidence="1">
    <location>
        <position position="23"/>
    </location>
</feature>
<feature type="active site" description="Proton donor" evidence="1">
    <location>
        <position position="51"/>
    </location>
</feature>
<feature type="binding site" evidence="1">
    <location>
        <begin position="22"/>
        <end position="28"/>
    </location>
    <ligand>
        <name>GTP</name>
        <dbReference type="ChEBI" id="CHEBI:37565"/>
    </ligand>
</feature>
<feature type="binding site" description="in other chain" evidence="1">
    <location>
        <begin position="23"/>
        <end position="26"/>
    </location>
    <ligand>
        <name>IMP</name>
        <dbReference type="ChEBI" id="CHEBI:58053"/>
        <note>ligand shared between dimeric partners</note>
    </ligand>
</feature>
<feature type="binding site" evidence="1">
    <location>
        <position position="23"/>
    </location>
    <ligand>
        <name>Mg(2+)</name>
        <dbReference type="ChEBI" id="CHEBI:18420"/>
    </ligand>
</feature>
<feature type="binding site" description="in other chain" evidence="1">
    <location>
        <begin position="48"/>
        <end position="51"/>
    </location>
    <ligand>
        <name>IMP</name>
        <dbReference type="ChEBI" id="CHEBI:58053"/>
        <note>ligand shared between dimeric partners</note>
    </ligand>
</feature>
<feature type="binding site" evidence="1">
    <location>
        <begin position="50"/>
        <end position="52"/>
    </location>
    <ligand>
        <name>GTP</name>
        <dbReference type="ChEBI" id="CHEBI:37565"/>
    </ligand>
</feature>
<feature type="binding site" evidence="1">
    <location>
        <position position="50"/>
    </location>
    <ligand>
        <name>Mg(2+)</name>
        <dbReference type="ChEBI" id="CHEBI:18420"/>
    </ligand>
</feature>
<feature type="binding site" description="in other chain" evidence="1">
    <location>
        <position position="139"/>
    </location>
    <ligand>
        <name>IMP</name>
        <dbReference type="ChEBI" id="CHEBI:58053"/>
        <note>ligand shared between dimeric partners</note>
    </ligand>
</feature>
<feature type="binding site" evidence="1">
    <location>
        <position position="153"/>
    </location>
    <ligand>
        <name>IMP</name>
        <dbReference type="ChEBI" id="CHEBI:58053"/>
        <note>ligand shared between dimeric partners</note>
    </ligand>
</feature>
<feature type="binding site" description="in other chain" evidence="1">
    <location>
        <position position="234"/>
    </location>
    <ligand>
        <name>IMP</name>
        <dbReference type="ChEBI" id="CHEBI:58053"/>
        <note>ligand shared between dimeric partners</note>
    </ligand>
</feature>
<feature type="binding site" description="in other chain" evidence="1">
    <location>
        <position position="249"/>
    </location>
    <ligand>
        <name>IMP</name>
        <dbReference type="ChEBI" id="CHEBI:58053"/>
        <note>ligand shared between dimeric partners</note>
    </ligand>
</feature>
<feature type="binding site" evidence="1">
    <location>
        <begin position="317"/>
        <end position="323"/>
    </location>
    <ligand>
        <name>substrate</name>
    </ligand>
</feature>
<feature type="binding site" description="in other chain" evidence="1">
    <location>
        <position position="321"/>
    </location>
    <ligand>
        <name>IMP</name>
        <dbReference type="ChEBI" id="CHEBI:58053"/>
        <note>ligand shared between dimeric partners</note>
    </ligand>
</feature>
<feature type="binding site" evidence="1">
    <location>
        <position position="323"/>
    </location>
    <ligand>
        <name>GTP</name>
        <dbReference type="ChEBI" id="CHEBI:37565"/>
    </ligand>
</feature>
<feature type="binding site" evidence="1">
    <location>
        <begin position="349"/>
        <end position="351"/>
    </location>
    <ligand>
        <name>GTP</name>
        <dbReference type="ChEBI" id="CHEBI:37565"/>
    </ligand>
</feature>
<feature type="binding site" evidence="1">
    <location>
        <begin position="431"/>
        <end position="433"/>
    </location>
    <ligand>
        <name>GTP</name>
        <dbReference type="ChEBI" id="CHEBI:37565"/>
    </ligand>
</feature>